<reference key="1">
    <citation type="submission" date="2007-11" db="EMBL/GenBank/DDBJ databases">
        <title>The genome sequence of the hyperthermophilic bacterium Thermotoga neapolitana.</title>
        <authorList>
            <person name="Lim S.K."/>
            <person name="Kim J.S."/>
            <person name="Cha S.H."/>
            <person name="Park B.C."/>
            <person name="Lee D.S."/>
            <person name="Tae H.S."/>
            <person name="Kim S.-J."/>
            <person name="Kim J.J."/>
            <person name="Park K.J."/>
            <person name="Lee S.Y."/>
        </authorList>
    </citation>
    <scope>NUCLEOTIDE SEQUENCE [LARGE SCALE GENOMIC DNA]</scope>
    <source>
        <strain>ATCC 49049 / DSM 4359 / NBRC 107923 / NS-E</strain>
    </source>
</reference>
<name>ISPH_THENN</name>
<accession>B9K8E2</accession>
<evidence type="ECO:0000255" key="1">
    <source>
        <dbReference type="HAMAP-Rule" id="MF_00191"/>
    </source>
</evidence>
<protein>
    <recommendedName>
        <fullName evidence="1">4-hydroxy-3-methylbut-2-enyl diphosphate reductase</fullName>
        <shortName evidence="1">HMBPP reductase</shortName>
        <ecNumber evidence="1">1.17.7.4</ecNumber>
    </recommendedName>
</protein>
<organism>
    <name type="scientific">Thermotoga neapolitana (strain ATCC 49049 / DSM 4359 / NBRC 107923 / NS-E)</name>
    <dbReference type="NCBI Taxonomy" id="309803"/>
    <lineage>
        <taxon>Bacteria</taxon>
        <taxon>Thermotogati</taxon>
        <taxon>Thermotogota</taxon>
        <taxon>Thermotogae</taxon>
        <taxon>Thermotogales</taxon>
        <taxon>Thermotogaceae</taxon>
        <taxon>Thermotoga</taxon>
    </lineage>
</organism>
<keyword id="KW-0004">4Fe-4S</keyword>
<keyword id="KW-0408">Iron</keyword>
<keyword id="KW-0411">Iron-sulfur</keyword>
<keyword id="KW-0414">Isoprene biosynthesis</keyword>
<keyword id="KW-0479">Metal-binding</keyword>
<keyword id="KW-0560">Oxidoreductase</keyword>
<sequence length="279" mass="31571">MKIIVAKNVGFCFGVERAIRTVENLLNEGKRVVTDGEIVHNRQVMEDLLKKGLKISSDPTDGDVFVVRAHGIPEEKLEKLRKIYPEVVDLTCPIVFQLFRTAREYSSRGKLIVFGKRDHPEMVALMGYAPAIVTKKPFKTEEKNVVFLSQTTSSLDEYREFVSEMIKMNNFEKAIYLNTICPVTVEREREVKELSKICDLSVVVGGKHSSNTGKLFRLASRNSRAIWVESPDEIPEDVVKYGTVCVFSGTSTPVSLIENVVRKLEEMEGKYYGTNGIQR</sequence>
<feature type="chain" id="PRO_1000124293" description="4-hydroxy-3-methylbut-2-enyl diphosphate reductase">
    <location>
        <begin position="1"/>
        <end position="279"/>
    </location>
</feature>
<feature type="active site" description="Proton donor" evidence="1">
    <location>
        <position position="121"/>
    </location>
</feature>
<feature type="binding site" evidence="1">
    <location>
        <position position="12"/>
    </location>
    <ligand>
        <name>[4Fe-4S] cluster</name>
        <dbReference type="ChEBI" id="CHEBI:49883"/>
    </ligand>
</feature>
<feature type="binding site" evidence="1">
    <location>
        <position position="40"/>
    </location>
    <ligand>
        <name>(2E)-4-hydroxy-3-methylbut-2-enyl diphosphate</name>
        <dbReference type="ChEBI" id="CHEBI:128753"/>
    </ligand>
</feature>
<feature type="binding site" evidence="1">
    <location>
        <position position="40"/>
    </location>
    <ligand>
        <name>dimethylallyl diphosphate</name>
        <dbReference type="ChEBI" id="CHEBI:57623"/>
    </ligand>
</feature>
<feature type="binding site" evidence="1">
    <location>
        <position position="40"/>
    </location>
    <ligand>
        <name>isopentenyl diphosphate</name>
        <dbReference type="ChEBI" id="CHEBI:128769"/>
    </ligand>
</feature>
<feature type="binding site" evidence="1">
    <location>
        <position position="70"/>
    </location>
    <ligand>
        <name>(2E)-4-hydroxy-3-methylbut-2-enyl diphosphate</name>
        <dbReference type="ChEBI" id="CHEBI:128753"/>
    </ligand>
</feature>
<feature type="binding site" evidence="1">
    <location>
        <position position="70"/>
    </location>
    <ligand>
        <name>dimethylallyl diphosphate</name>
        <dbReference type="ChEBI" id="CHEBI:57623"/>
    </ligand>
</feature>
<feature type="binding site" evidence="1">
    <location>
        <position position="70"/>
    </location>
    <ligand>
        <name>isopentenyl diphosphate</name>
        <dbReference type="ChEBI" id="CHEBI:128769"/>
    </ligand>
</feature>
<feature type="binding site" evidence="1">
    <location>
        <position position="92"/>
    </location>
    <ligand>
        <name>[4Fe-4S] cluster</name>
        <dbReference type="ChEBI" id="CHEBI:49883"/>
    </ligand>
</feature>
<feature type="binding site" evidence="1">
    <location>
        <position position="119"/>
    </location>
    <ligand>
        <name>(2E)-4-hydroxy-3-methylbut-2-enyl diphosphate</name>
        <dbReference type="ChEBI" id="CHEBI:128753"/>
    </ligand>
</feature>
<feature type="binding site" evidence="1">
    <location>
        <position position="119"/>
    </location>
    <ligand>
        <name>dimethylallyl diphosphate</name>
        <dbReference type="ChEBI" id="CHEBI:57623"/>
    </ligand>
</feature>
<feature type="binding site" evidence="1">
    <location>
        <position position="119"/>
    </location>
    <ligand>
        <name>isopentenyl diphosphate</name>
        <dbReference type="ChEBI" id="CHEBI:128769"/>
    </ligand>
</feature>
<feature type="binding site" evidence="1">
    <location>
        <position position="151"/>
    </location>
    <ligand>
        <name>(2E)-4-hydroxy-3-methylbut-2-enyl diphosphate</name>
        <dbReference type="ChEBI" id="CHEBI:128753"/>
    </ligand>
</feature>
<feature type="binding site" evidence="1">
    <location>
        <position position="181"/>
    </location>
    <ligand>
        <name>[4Fe-4S] cluster</name>
        <dbReference type="ChEBI" id="CHEBI:49883"/>
    </ligand>
</feature>
<feature type="binding site" evidence="1">
    <location>
        <position position="209"/>
    </location>
    <ligand>
        <name>(2E)-4-hydroxy-3-methylbut-2-enyl diphosphate</name>
        <dbReference type="ChEBI" id="CHEBI:128753"/>
    </ligand>
</feature>
<feature type="binding site" evidence="1">
    <location>
        <position position="209"/>
    </location>
    <ligand>
        <name>dimethylallyl diphosphate</name>
        <dbReference type="ChEBI" id="CHEBI:57623"/>
    </ligand>
</feature>
<feature type="binding site" evidence="1">
    <location>
        <position position="209"/>
    </location>
    <ligand>
        <name>isopentenyl diphosphate</name>
        <dbReference type="ChEBI" id="CHEBI:128769"/>
    </ligand>
</feature>
<feature type="binding site" evidence="1">
    <location>
        <position position="210"/>
    </location>
    <ligand>
        <name>(2E)-4-hydroxy-3-methylbut-2-enyl diphosphate</name>
        <dbReference type="ChEBI" id="CHEBI:128753"/>
    </ligand>
</feature>
<feature type="binding site" evidence="1">
    <location>
        <position position="210"/>
    </location>
    <ligand>
        <name>dimethylallyl diphosphate</name>
        <dbReference type="ChEBI" id="CHEBI:57623"/>
    </ligand>
</feature>
<feature type="binding site" evidence="1">
    <location>
        <position position="210"/>
    </location>
    <ligand>
        <name>isopentenyl diphosphate</name>
        <dbReference type="ChEBI" id="CHEBI:128769"/>
    </ligand>
</feature>
<feature type="binding site" evidence="1">
    <location>
        <position position="211"/>
    </location>
    <ligand>
        <name>(2E)-4-hydroxy-3-methylbut-2-enyl diphosphate</name>
        <dbReference type="ChEBI" id="CHEBI:128753"/>
    </ligand>
</feature>
<feature type="binding site" evidence="1">
    <location>
        <position position="211"/>
    </location>
    <ligand>
        <name>dimethylallyl diphosphate</name>
        <dbReference type="ChEBI" id="CHEBI:57623"/>
    </ligand>
</feature>
<feature type="binding site" evidence="1">
    <location>
        <position position="211"/>
    </location>
    <ligand>
        <name>isopentenyl diphosphate</name>
        <dbReference type="ChEBI" id="CHEBI:128769"/>
    </ligand>
</feature>
<feature type="binding site" evidence="1">
    <location>
        <position position="251"/>
    </location>
    <ligand>
        <name>(2E)-4-hydroxy-3-methylbut-2-enyl diphosphate</name>
        <dbReference type="ChEBI" id="CHEBI:128753"/>
    </ligand>
</feature>
<feature type="binding site" evidence="1">
    <location>
        <position position="251"/>
    </location>
    <ligand>
        <name>dimethylallyl diphosphate</name>
        <dbReference type="ChEBI" id="CHEBI:57623"/>
    </ligand>
</feature>
<feature type="binding site" evidence="1">
    <location>
        <position position="251"/>
    </location>
    <ligand>
        <name>isopentenyl diphosphate</name>
        <dbReference type="ChEBI" id="CHEBI:128769"/>
    </ligand>
</feature>
<comment type="function">
    <text evidence="1">Catalyzes the conversion of 1-hydroxy-2-methyl-2-(E)-butenyl 4-diphosphate (HMBPP) into a mixture of isopentenyl diphosphate (IPP) and dimethylallyl diphosphate (DMAPP). Acts in the terminal step of the DOXP/MEP pathway for isoprenoid precursor biosynthesis.</text>
</comment>
<comment type="catalytic activity">
    <reaction evidence="1">
        <text>isopentenyl diphosphate + 2 oxidized [2Fe-2S]-[ferredoxin] + H2O = (2E)-4-hydroxy-3-methylbut-2-enyl diphosphate + 2 reduced [2Fe-2S]-[ferredoxin] + 2 H(+)</text>
        <dbReference type="Rhea" id="RHEA:24488"/>
        <dbReference type="Rhea" id="RHEA-COMP:10000"/>
        <dbReference type="Rhea" id="RHEA-COMP:10001"/>
        <dbReference type="ChEBI" id="CHEBI:15377"/>
        <dbReference type="ChEBI" id="CHEBI:15378"/>
        <dbReference type="ChEBI" id="CHEBI:33737"/>
        <dbReference type="ChEBI" id="CHEBI:33738"/>
        <dbReference type="ChEBI" id="CHEBI:128753"/>
        <dbReference type="ChEBI" id="CHEBI:128769"/>
        <dbReference type="EC" id="1.17.7.4"/>
    </reaction>
</comment>
<comment type="catalytic activity">
    <reaction evidence="1">
        <text>dimethylallyl diphosphate + 2 oxidized [2Fe-2S]-[ferredoxin] + H2O = (2E)-4-hydroxy-3-methylbut-2-enyl diphosphate + 2 reduced [2Fe-2S]-[ferredoxin] + 2 H(+)</text>
        <dbReference type="Rhea" id="RHEA:24825"/>
        <dbReference type="Rhea" id="RHEA-COMP:10000"/>
        <dbReference type="Rhea" id="RHEA-COMP:10001"/>
        <dbReference type="ChEBI" id="CHEBI:15377"/>
        <dbReference type="ChEBI" id="CHEBI:15378"/>
        <dbReference type="ChEBI" id="CHEBI:33737"/>
        <dbReference type="ChEBI" id="CHEBI:33738"/>
        <dbReference type="ChEBI" id="CHEBI:57623"/>
        <dbReference type="ChEBI" id="CHEBI:128753"/>
        <dbReference type="EC" id="1.17.7.4"/>
    </reaction>
</comment>
<comment type="cofactor">
    <cofactor evidence="1">
        <name>[4Fe-4S] cluster</name>
        <dbReference type="ChEBI" id="CHEBI:49883"/>
    </cofactor>
    <text evidence="1">Binds 1 [4Fe-4S] cluster per subunit.</text>
</comment>
<comment type="pathway">
    <text evidence="1">Isoprenoid biosynthesis; dimethylallyl diphosphate biosynthesis; dimethylallyl diphosphate from (2E)-4-hydroxy-3-methylbutenyl diphosphate: step 1/1.</text>
</comment>
<comment type="pathway">
    <text evidence="1">Isoprenoid biosynthesis; isopentenyl diphosphate biosynthesis via DXP pathway; isopentenyl diphosphate from 1-deoxy-D-xylulose 5-phosphate: step 6/6.</text>
</comment>
<comment type="similarity">
    <text evidence="1">Belongs to the IspH family.</text>
</comment>
<dbReference type="EC" id="1.17.7.4" evidence="1"/>
<dbReference type="EMBL" id="CP000916">
    <property type="protein sequence ID" value="ACM23225.1"/>
    <property type="molecule type" value="Genomic_DNA"/>
</dbReference>
<dbReference type="RefSeq" id="WP_015919541.1">
    <property type="nucleotide sequence ID" value="NC_011978.1"/>
</dbReference>
<dbReference type="SMR" id="B9K8E2"/>
<dbReference type="STRING" id="309803.CTN_1049"/>
<dbReference type="KEGG" id="tna:CTN_1049"/>
<dbReference type="eggNOG" id="COG0761">
    <property type="taxonomic scope" value="Bacteria"/>
</dbReference>
<dbReference type="HOGENOM" id="CLU_027486_0_1_0"/>
<dbReference type="UniPathway" id="UPA00056">
    <property type="reaction ID" value="UER00097"/>
</dbReference>
<dbReference type="UniPathway" id="UPA00059">
    <property type="reaction ID" value="UER00105"/>
</dbReference>
<dbReference type="Proteomes" id="UP000000445">
    <property type="component" value="Chromosome"/>
</dbReference>
<dbReference type="GO" id="GO:0051539">
    <property type="term" value="F:4 iron, 4 sulfur cluster binding"/>
    <property type="evidence" value="ECO:0007669"/>
    <property type="project" value="UniProtKB-UniRule"/>
</dbReference>
<dbReference type="GO" id="GO:0051745">
    <property type="term" value="F:4-hydroxy-3-methylbut-2-enyl diphosphate reductase activity"/>
    <property type="evidence" value="ECO:0007669"/>
    <property type="project" value="UniProtKB-UniRule"/>
</dbReference>
<dbReference type="GO" id="GO:0046872">
    <property type="term" value="F:metal ion binding"/>
    <property type="evidence" value="ECO:0007669"/>
    <property type="project" value="UniProtKB-KW"/>
</dbReference>
<dbReference type="GO" id="GO:0050992">
    <property type="term" value="P:dimethylallyl diphosphate biosynthetic process"/>
    <property type="evidence" value="ECO:0007669"/>
    <property type="project" value="UniProtKB-UniRule"/>
</dbReference>
<dbReference type="GO" id="GO:0019288">
    <property type="term" value="P:isopentenyl diphosphate biosynthetic process, methylerythritol 4-phosphate pathway"/>
    <property type="evidence" value="ECO:0007669"/>
    <property type="project" value="UniProtKB-UniRule"/>
</dbReference>
<dbReference type="GO" id="GO:0016114">
    <property type="term" value="P:terpenoid biosynthetic process"/>
    <property type="evidence" value="ECO:0007669"/>
    <property type="project" value="UniProtKB-UniRule"/>
</dbReference>
<dbReference type="CDD" id="cd13944">
    <property type="entry name" value="lytB_ispH"/>
    <property type="match status" value="1"/>
</dbReference>
<dbReference type="Gene3D" id="3.40.50.11270">
    <property type="match status" value="1"/>
</dbReference>
<dbReference type="Gene3D" id="3.40.1010.20">
    <property type="entry name" value="4-hydroxy-3-methylbut-2-enyl diphosphate reductase, catalytic domain"/>
    <property type="match status" value="2"/>
</dbReference>
<dbReference type="HAMAP" id="MF_00191">
    <property type="entry name" value="IspH"/>
    <property type="match status" value="1"/>
</dbReference>
<dbReference type="InterPro" id="IPR003451">
    <property type="entry name" value="LytB/IspH"/>
</dbReference>
<dbReference type="NCBIfam" id="TIGR00216">
    <property type="entry name" value="ispH_lytB"/>
    <property type="match status" value="1"/>
</dbReference>
<dbReference type="PANTHER" id="PTHR30426">
    <property type="entry name" value="4-HYDROXY-3-METHYLBUT-2-ENYL DIPHOSPHATE REDUCTASE"/>
    <property type="match status" value="1"/>
</dbReference>
<dbReference type="PANTHER" id="PTHR30426:SF0">
    <property type="entry name" value="4-HYDROXY-3-METHYLBUT-2-ENYL DIPHOSPHATE REDUCTASE"/>
    <property type="match status" value="1"/>
</dbReference>
<dbReference type="Pfam" id="PF02401">
    <property type="entry name" value="LYTB"/>
    <property type="match status" value="1"/>
</dbReference>
<gene>
    <name evidence="1" type="primary">ispH</name>
    <name type="ordered locus">CTN_1049</name>
</gene>
<proteinExistence type="inferred from homology"/>